<protein>
    <recommendedName>
        <fullName>Ferric aerobactin receptor</fullName>
    </recommendedName>
    <alternativeName>
        <fullName>Iron-regulated outer membrane proteins</fullName>
        <shortName>IROMPs</shortName>
    </alternativeName>
</protein>
<proteinExistence type="evidence at protein level"/>
<organism>
    <name type="scientific">Klebsiella pneumoniae</name>
    <dbReference type="NCBI Taxonomy" id="573"/>
    <lineage>
        <taxon>Bacteria</taxon>
        <taxon>Pseudomonadati</taxon>
        <taxon>Pseudomonadota</taxon>
        <taxon>Gammaproteobacteria</taxon>
        <taxon>Enterobacterales</taxon>
        <taxon>Enterobacteriaceae</taxon>
        <taxon>Klebsiella/Raoultella group</taxon>
        <taxon>Klebsiella</taxon>
        <taxon>Klebsiella pneumoniae complex</taxon>
    </lineage>
</organism>
<name>IUTA_KLEPN</name>
<dbReference type="EMBL" id="AY378100">
    <property type="protein sequence ID" value="AAR07714.1"/>
    <property type="molecule type" value="Genomic_DNA"/>
</dbReference>
<dbReference type="RefSeq" id="NP_943364.1">
    <property type="nucleotide sequence ID" value="NC_005249.1"/>
</dbReference>
<dbReference type="RefSeq" id="WP_004213924.1">
    <property type="nucleotide sequence ID" value="NZ_WYAM01000033.1"/>
</dbReference>
<dbReference type="SMR" id="Q6U607"/>
<dbReference type="PHI-base" id="PHI:6563"/>
<dbReference type="GO" id="GO:0009279">
    <property type="term" value="C:cell outer membrane"/>
    <property type="evidence" value="ECO:0007669"/>
    <property type="project" value="UniProtKB-SubCell"/>
</dbReference>
<dbReference type="GO" id="GO:0015344">
    <property type="term" value="F:siderophore uptake transmembrane transporter activity"/>
    <property type="evidence" value="ECO:0007669"/>
    <property type="project" value="TreeGrafter"/>
</dbReference>
<dbReference type="GO" id="GO:0038023">
    <property type="term" value="F:signaling receptor activity"/>
    <property type="evidence" value="ECO:0007669"/>
    <property type="project" value="InterPro"/>
</dbReference>
<dbReference type="GO" id="GO:0019271">
    <property type="term" value="P:aerobactin transport"/>
    <property type="evidence" value="ECO:0000250"/>
    <property type="project" value="UniProtKB"/>
</dbReference>
<dbReference type="CDD" id="cd01347">
    <property type="entry name" value="ligand_gated_channel"/>
    <property type="match status" value="1"/>
</dbReference>
<dbReference type="FunFam" id="2.40.170.20:FF:000007">
    <property type="entry name" value="Ferric aerobactin receptor"/>
    <property type="match status" value="1"/>
</dbReference>
<dbReference type="FunFam" id="2.170.130.10:FF:000011">
    <property type="entry name" value="TonB-dependent siderophore receptor"/>
    <property type="match status" value="1"/>
</dbReference>
<dbReference type="Gene3D" id="2.40.170.20">
    <property type="entry name" value="TonB-dependent receptor, beta-barrel domain"/>
    <property type="match status" value="1"/>
</dbReference>
<dbReference type="Gene3D" id="2.170.130.10">
    <property type="entry name" value="TonB-dependent receptor, plug domain"/>
    <property type="match status" value="1"/>
</dbReference>
<dbReference type="InterPro" id="IPR012910">
    <property type="entry name" value="Plug_dom"/>
</dbReference>
<dbReference type="InterPro" id="IPR037066">
    <property type="entry name" value="Plug_dom_sf"/>
</dbReference>
<dbReference type="InterPro" id="IPR039426">
    <property type="entry name" value="TonB-dep_rcpt-like"/>
</dbReference>
<dbReference type="InterPro" id="IPR000531">
    <property type="entry name" value="TonB-dep_rcpt_b-brl"/>
</dbReference>
<dbReference type="InterPro" id="IPR010916">
    <property type="entry name" value="TonB_box_CS"/>
</dbReference>
<dbReference type="InterPro" id="IPR036942">
    <property type="entry name" value="TonB_rcpt_b-brl_sf"/>
</dbReference>
<dbReference type="InterPro" id="IPR010917">
    <property type="entry name" value="TonB_rcpt_CS"/>
</dbReference>
<dbReference type="InterPro" id="IPR010105">
    <property type="entry name" value="TonB_sidphr_rcpt"/>
</dbReference>
<dbReference type="NCBIfam" id="TIGR01783">
    <property type="entry name" value="TonB-siderophor"/>
    <property type="match status" value="1"/>
</dbReference>
<dbReference type="PANTHER" id="PTHR30069:SF42">
    <property type="entry name" value="FERRIC AEROBACTIN RECEPTOR"/>
    <property type="match status" value="1"/>
</dbReference>
<dbReference type="PANTHER" id="PTHR30069">
    <property type="entry name" value="TONB-DEPENDENT OUTER MEMBRANE RECEPTOR"/>
    <property type="match status" value="1"/>
</dbReference>
<dbReference type="Pfam" id="PF07715">
    <property type="entry name" value="Plug"/>
    <property type="match status" value="1"/>
</dbReference>
<dbReference type="Pfam" id="PF00593">
    <property type="entry name" value="TonB_dep_Rec_b-barrel"/>
    <property type="match status" value="1"/>
</dbReference>
<dbReference type="SUPFAM" id="SSF56935">
    <property type="entry name" value="Porins"/>
    <property type="match status" value="1"/>
</dbReference>
<dbReference type="PROSITE" id="PS00430">
    <property type="entry name" value="TONB_DEPENDENT_REC_1"/>
    <property type="match status" value="1"/>
</dbReference>
<dbReference type="PROSITE" id="PS01156">
    <property type="entry name" value="TONB_DEPENDENT_REC_2"/>
    <property type="match status" value="1"/>
</dbReference>
<dbReference type="PROSITE" id="PS52016">
    <property type="entry name" value="TONB_DEPENDENT_REC_3"/>
    <property type="match status" value="1"/>
</dbReference>
<evidence type="ECO:0000250" key="1"/>
<evidence type="ECO:0000255" key="2">
    <source>
        <dbReference type="PROSITE-ProRule" id="PRU01360"/>
    </source>
</evidence>
<evidence type="ECO:0000269" key="3">
    <source ref="2"/>
</evidence>
<evidence type="ECO:0000305" key="4"/>
<geneLocation type="plasmid">
    <name>pLVPK</name>
</geneLocation>
<gene>
    <name type="primary">iutA</name>
    <name type="ORF">LV107</name>
</gene>
<reference key="1">
    <citation type="journal article" date="2004" name="Gene">
        <title>Sequencing and analysis of the large virulence plasmid pLVPK of Klebsiella pneumoniae CG43.</title>
        <authorList>
            <person name="Chen Y.-T."/>
            <person name="Chang H.-Y."/>
            <person name="Lai Y.-C."/>
            <person name="Pan C.-C."/>
            <person name="Tsai S.-F."/>
            <person name="Peng H.-L."/>
        </authorList>
    </citation>
    <scope>NUCLEOTIDE SEQUENCE [GENOMIC DNA]</scope>
    <source>
        <strain>CG43</strain>
    </source>
</reference>
<reference key="2">
    <citation type="journal article" date="1987" name="FEMS Microbiol. Lett.">
        <title>Expression of high affinity iron uptake systems by clinical isolates of Klebsiella.</title>
        <authorList>
            <person name="Williams P."/>
            <person name="Chart H."/>
            <person name="Griffiths E."/>
            <person name="Stevenson P."/>
        </authorList>
    </citation>
    <scope>FUNCTION AS AN AEROBACTIN RECEPTOR</scope>
    <scope>INDUCTION</scope>
    <scope>SUBCELLULAR LOCATION</scope>
</reference>
<accession>Q6U607</accession>
<sequence length="733" mass="80853">MMISKKYTLWALNPLLLTMMAPAVAQQTDDETFVVSANRSNRTVAEMAQTTWVIENAELEQQIQGGKELKDALAQLIPGLDVSSRSRTNYGMNVRGRPLVVLVDGVRLNSSRTDSRQLDSIDPFNIDRIEVISGATSLYGGGSTGGLINIVTKKGQPETIMEFEAGTKSGFSSSKDHDERIAGAVSGGNEHISGRLSVAYQKFGGWFDGNGDATLLDNTQTGLQYSDRLDIMGTGTLNIDESRQLQLITQYYKSQGDDDYGLNLGKGFSAIRGTSTPFVSNGLNSDRIPGTERHLISLQYSDSAFLGQELVGQVYYRDESLRFYPFPTVNANKQVTAFSSSQQDTDQYGMKLTLNSKPMDGWQITWGLDADHERFTSNQMFFDLAQASASGGLNNKKIYTTGRYPSYDITNLAAFLQSGYDINNLFTLNGGVRYQYTENKIDDFIGYAQQRQIAAGKATSADAIPGGSVDYDNFLFNAGLLMHITERQQAWLNFSQGVELPDPGKYYGRGIYGAAVNGHLPLTKSVNVSDSKLEGVKVDSYELGWRFTGNNLRTQIAAYYSISDKSVVANKDLTISVVDDKRRIYGVEGAVDYLIPDTDWSTGVNFNVLKTESKVNGTWQKYDVKTASPSKATAYIGWAPDPWSLRVQSTTSFDVSDAQGYKVDGYTTVDLLGSYQLPVGTLSFSIENLFDRDYTTVWGQRAPLYYSPGYGPASLYDYKGRGRTFGLNYSVLF</sequence>
<keyword id="KW-0998">Cell outer membrane</keyword>
<keyword id="KW-0406">Ion transport</keyword>
<keyword id="KW-0408">Iron</keyword>
<keyword id="KW-0410">Iron transport</keyword>
<keyword id="KW-0472">Membrane</keyword>
<keyword id="KW-0614">Plasmid</keyword>
<keyword id="KW-0675">Receptor</keyword>
<keyword id="KW-0732">Signal</keyword>
<keyword id="KW-0798">TonB box</keyword>
<keyword id="KW-0812">Transmembrane</keyword>
<keyword id="KW-1134">Transmembrane beta strand</keyword>
<keyword id="KW-0813">Transport</keyword>
<comment type="function">
    <text evidence="3">Receptor for aerobactin.</text>
</comment>
<comment type="subcellular location">
    <subcellularLocation>
        <location evidence="2 3">Cell outer membrane</location>
        <topology evidence="2">Multi-pass membrane protein</topology>
    </subcellularLocation>
</comment>
<comment type="induction">
    <text evidence="3">Under iron starvation.</text>
</comment>
<comment type="similarity">
    <text evidence="4">Belongs to the TonB-dependent receptor family.</text>
</comment>
<feature type="signal peptide">
    <location>
        <begin position="1"/>
        <end position="25"/>
    </location>
</feature>
<feature type="chain" id="PRO_0000415650" description="Ferric aerobactin receptor">
    <location>
        <begin position="26"/>
        <end position="733"/>
    </location>
</feature>
<feature type="domain" description="TBDR plug" evidence="2">
    <location>
        <begin position="43"/>
        <end position="153"/>
    </location>
</feature>
<feature type="domain" description="TBDR beta-barrel" evidence="2">
    <location>
        <begin position="158"/>
        <end position="733"/>
    </location>
</feature>
<feature type="short sequence motif" description="TonB box" evidence="1">
    <location>
        <begin position="31"/>
        <end position="38"/>
    </location>
</feature>
<feature type="short sequence motif" description="TonB C-terminal box" evidence="1">
    <location>
        <begin position="716"/>
        <end position="733"/>
    </location>
</feature>